<reference evidence="4" key="1">
    <citation type="journal article" date="1999" name="Nature">
        <title>Sequence and analysis of chromosome 4 of the plant Arabidopsis thaliana.</title>
        <authorList>
            <person name="Mayer K.F.X."/>
            <person name="Schueller C."/>
            <person name="Wambutt R."/>
            <person name="Murphy G."/>
            <person name="Volckaert G."/>
            <person name="Pohl T."/>
            <person name="Duesterhoeft A."/>
            <person name="Stiekema W."/>
            <person name="Entian K.-D."/>
            <person name="Terryn N."/>
            <person name="Harris B."/>
            <person name="Ansorge W."/>
            <person name="Brandt P."/>
            <person name="Grivell L.A."/>
            <person name="Rieger M."/>
            <person name="Weichselgartner M."/>
            <person name="de Simone V."/>
            <person name="Obermaier B."/>
            <person name="Mache R."/>
            <person name="Mueller M."/>
            <person name="Kreis M."/>
            <person name="Delseny M."/>
            <person name="Puigdomenech P."/>
            <person name="Watson M."/>
            <person name="Schmidtheini T."/>
            <person name="Reichert B."/>
            <person name="Portetelle D."/>
            <person name="Perez-Alonso M."/>
            <person name="Boutry M."/>
            <person name="Bancroft I."/>
            <person name="Vos P."/>
            <person name="Hoheisel J."/>
            <person name="Zimmermann W."/>
            <person name="Wedler H."/>
            <person name="Ridley P."/>
            <person name="Langham S.-A."/>
            <person name="McCullagh B."/>
            <person name="Bilham L."/>
            <person name="Robben J."/>
            <person name="van der Schueren J."/>
            <person name="Grymonprez B."/>
            <person name="Chuang Y.-J."/>
            <person name="Vandenbussche F."/>
            <person name="Braeken M."/>
            <person name="Weltjens I."/>
            <person name="Voet M."/>
            <person name="Bastiaens I."/>
            <person name="Aert R."/>
            <person name="Defoor E."/>
            <person name="Weitzenegger T."/>
            <person name="Bothe G."/>
            <person name="Ramsperger U."/>
            <person name="Hilbert H."/>
            <person name="Braun M."/>
            <person name="Holzer E."/>
            <person name="Brandt A."/>
            <person name="Peters S."/>
            <person name="van Staveren M."/>
            <person name="Dirkse W."/>
            <person name="Mooijman P."/>
            <person name="Klein Lankhorst R."/>
            <person name="Rose M."/>
            <person name="Hauf J."/>
            <person name="Koetter P."/>
            <person name="Berneiser S."/>
            <person name="Hempel S."/>
            <person name="Feldpausch M."/>
            <person name="Lamberth S."/>
            <person name="Van den Daele H."/>
            <person name="De Keyser A."/>
            <person name="Buysshaert C."/>
            <person name="Gielen J."/>
            <person name="Villarroel R."/>
            <person name="De Clercq R."/>
            <person name="van Montagu M."/>
            <person name="Rogers J."/>
            <person name="Cronin A."/>
            <person name="Quail M.A."/>
            <person name="Bray-Allen S."/>
            <person name="Clark L."/>
            <person name="Doggett J."/>
            <person name="Hall S."/>
            <person name="Kay M."/>
            <person name="Lennard N."/>
            <person name="McLay K."/>
            <person name="Mayes R."/>
            <person name="Pettett A."/>
            <person name="Rajandream M.A."/>
            <person name="Lyne M."/>
            <person name="Benes V."/>
            <person name="Rechmann S."/>
            <person name="Borkova D."/>
            <person name="Bloecker H."/>
            <person name="Scharfe M."/>
            <person name="Grimm M."/>
            <person name="Loehnert T.-H."/>
            <person name="Dose S."/>
            <person name="de Haan M."/>
            <person name="Maarse A.C."/>
            <person name="Schaefer M."/>
            <person name="Mueller-Auer S."/>
            <person name="Gabel C."/>
            <person name="Fuchs M."/>
            <person name="Fartmann B."/>
            <person name="Granderath K."/>
            <person name="Dauner D."/>
            <person name="Herzl A."/>
            <person name="Neumann S."/>
            <person name="Argiriou A."/>
            <person name="Vitale D."/>
            <person name="Liguori R."/>
            <person name="Piravandi E."/>
            <person name="Massenet O."/>
            <person name="Quigley F."/>
            <person name="Clabauld G."/>
            <person name="Muendlein A."/>
            <person name="Felber R."/>
            <person name="Schnabl S."/>
            <person name="Hiller R."/>
            <person name="Schmidt W."/>
            <person name="Lecharny A."/>
            <person name="Aubourg S."/>
            <person name="Chefdor F."/>
            <person name="Cooke R."/>
            <person name="Berger C."/>
            <person name="Monfort A."/>
            <person name="Casacuberta E."/>
            <person name="Gibbons T."/>
            <person name="Weber N."/>
            <person name="Vandenbol M."/>
            <person name="Bargues M."/>
            <person name="Terol J."/>
            <person name="Torres A."/>
            <person name="Perez-Perez A."/>
            <person name="Purnelle B."/>
            <person name="Bent E."/>
            <person name="Johnson S."/>
            <person name="Tacon D."/>
            <person name="Jesse T."/>
            <person name="Heijnen L."/>
            <person name="Schwarz S."/>
            <person name="Scholler P."/>
            <person name="Heber S."/>
            <person name="Francs P."/>
            <person name="Bielke C."/>
            <person name="Frishman D."/>
            <person name="Haase D."/>
            <person name="Lemcke K."/>
            <person name="Mewes H.-W."/>
            <person name="Stocker S."/>
            <person name="Zaccaria P."/>
            <person name="Bevan M."/>
            <person name="Wilson R.K."/>
            <person name="de la Bastide M."/>
            <person name="Habermann K."/>
            <person name="Parnell L."/>
            <person name="Dedhia N."/>
            <person name="Gnoj L."/>
            <person name="Schutz K."/>
            <person name="Huang E."/>
            <person name="Spiegel L."/>
            <person name="Sekhon M."/>
            <person name="Murray J."/>
            <person name="Sheet P."/>
            <person name="Cordes M."/>
            <person name="Abu-Threideh J."/>
            <person name="Stoneking T."/>
            <person name="Kalicki J."/>
            <person name="Graves T."/>
            <person name="Harmon G."/>
            <person name="Edwards J."/>
            <person name="Latreille P."/>
            <person name="Courtney L."/>
            <person name="Cloud J."/>
            <person name="Abbott A."/>
            <person name="Scott K."/>
            <person name="Johnson D."/>
            <person name="Minx P."/>
            <person name="Bentley D."/>
            <person name="Fulton B."/>
            <person name="Miller N."/>
            <person name="Greco T."/>
            <person name="Kemp K."/>
            <person name="Kramer J."/>
            <person name="Fulton L."/>
            <person name="Mardis E."/>
            <person name="Dante M."/>
            <person name="Pepin K."/>
            <person name="Hillier L.W."/>
            <person name="Nelson J."/>
            <person name="Spieth J."/>
            <person name="Ryan E."/>
            <person name="Andrews S."/>
            <person name="Geisel C."/>
            <person name="Layman D."/>
            <person name="Du H."/>
            <person name="Ali J."/>
            <person name="Berghoff A."/>
            <person name="Jones K."/>
            <person name="Drone K."/>
            <person name="Cotton M."/>
            <person name="Joshu C."/>
            <person name="Antonoiu B."/>
            <person name="Zidanic M."/>
            <person name="Strong C."/>
            <person name="Sun H."/>
            <person name="Lamar B."/>
            <person name="Yordan C."/>
            <person name="Ma P."/>
            <person name="Zhong J."/>
            <person name="Preston R."/>
            <person name="Vil D."/>
            <person name="Shekher M."/>
            <person name="Matero A."/>
            <person name="Shah R."/>
            <person name="Swaby I.K."/>
            <person name="O'Shaughnessy A."/>
            <person name="Rodriguez M."/>
            <person name="Hoffman J."/>
            <person name="Till S."/>
            <person name="Granat S."/>
            <person name="Shohdy N."/>
            <person name="Hasegawa A."/>
            <person name="Hameed A."/>
            <person name="Lodhi M."/>
            <person name="Johnson A."/>
            <person name="Chen E."/>
            <person name="Marra M.A."/>
            <person name="Martienssen R."/>
            <person name="McCombie W.R."/>
        </authorList>
    </citation>
    <scope>NUCLEOTIDE SEQUENCE [LARGE SCALE GENOMIC DNA]</scope>
    <source>
        <strain evidence="3">cv. Columbia</strain>
    </source>
</reference>
<reference key="2">
    <citation type="journal article" date="2017" name="Plant J.">
        <title>Araport11: a complete reannotation of the Arabidopsis thaliana reference genome.</title>
        <authorList>
            <person name="Cheng C.Y."/>
            <person name="Krishnakumar V."/>
            <person name="Chan A.P."/>
            <person name="Thibaud-Nissen F."/>
            <person name="Schobel S."/>
            <person name="Town C.D."/>
        </authorList>
    </citation>
    <scope>GENOME REANNOTATION</scope>
    <source>
        <strain>cv. Columbia</strain>
    </source>
</reference>
<reference key="3">
    <citation type="journal article" date="2005" name="Plant Physiol.">
        <title>Genome organization of more than 300 defensin-like genes in Arabidopsis.</title>
        <authorList>
            <person name="Silverstein K.A.T."/>
            <person name="Graham M.A."/>
            <person name="Paape T.D."/>
            <person name="VandenBosch K.A."/>
        </authorList>
    </citation>
    <scope>NUCLEOTIDE SEQUENCE [MRNA] OF 1-57</scope>
    <scope>GENE FAMILY</scope>
</reference>
<reference evidence="4" key="4">
    <citation type="journal article" date="2001" name="Plant Mol. Biol.">
        <title>Two large Arabidopsis thaliana gene families are homologous to the Brassica gene superfamily that encodes pollen coat proteins and the male component of the self-incompatibility response.</title>
        <authorList>
            <person name="Vanoosthuyse V."/>
            <person name="Miege C."/>
            <person name="Dumas C."/>
            <person name="Cock J.M."/>
        </authorList>
    </citation>
    <scope>IDENTIFICATION</scope>
</reference>
<evidence type="ECO:0000250" key="1"/>
<evidence type="ECO:0000255" key="2"/>
<evidence type="ECO:0000269" key="3">
    <source>
    </source>
</evidence>
<evidence type="ECO:0000305" key="4"/>
<protein>
    <recommendedName>
        <fullName>Defensin-like protein 173</fullName>
    </recommendedName>
    <alternativeName>
        <fullName>Low-molecular-weight cysteine-rich protein 63</fullName>
        <shortName>Protein LCR63</shortName>
    </alternativeName>
</protein>
<feature type="signal peptide" evidence="2">
    <location>
        <begin position="1"/>
        <end position="23"/>
    </location>
</feature>
<feature type="chain" id="PRO_0000017301" description="Defensin-like protein 173">
    <location>
        <begin position="24"/>
        <end position="78"/>
    </location>
</feature>
<feature type="disulfide bond" evidence="1">
    <location>
        <begin position="27"/>
        <end position="71"/>
    </location>
</feature>
<feature type="disulfide bond" evidence="1">
    <location>
        <begin position="34"/>
        <end position="56"/>
    </location>
</feature>
<feature type="disulfide bond" evidence="1">
    <location>
        <begin position="40"/>
        <end position="65"/>
    </location>
</feature>
<feature type="disulfide bond" evidence="1">
    <location>
        <begin position="44"/>
        <end position="67"/>
    </location>
</feature>
<feature type="sequence conflict" description="In Ref. 3; AAX39310." evidence="4" ref="3">
    <original>A</original>
    <variation>T</variation>
    <location>
        <position position="4"/>
    </location>
</feature>
<comment type="subcellular location">
    <subcellularLocation>
        <location evidence="1">Secreted</location>
    </subcellularLocation>
</comment>
<comment type="similarity">
    <text evidence="4">Belongs to the DEFL family.</text>
</comment>
<gene>
    <name type="primary">LCR63</name>
    <name type="ordered locus">At4g30067</name>
    <name type="ORF">F6G3</name>
</gene>
<dbReference type="EMBL" id="AL078464">
    <property type="status" value="NOT_ANNOTATED_CDS"/>
    <property type="molecule type" value="Genomic_DNA"/>
</dbReference>
<dbReference type="EMBL" id="AL161576">
    <property type="status" value="NOT_ANNOTATED_CDS"/>
    <property type="molecule type" value="Genomic_DNA"/>
</dbReference>
<dbReference type="EMBL" id="CP002687">
    <property type="protein sequence ID" value="AEE85715.1"/>
    <property type="molecule type" value="Genomic_DNA"/>
</dbReference>
<dbReference type="EMBL" id="AY803269">
    <property type="protein sequence ID" value="AAX39310.1"/>
    <property type="molecule type" value="mRNA"/>
</dbReference>
<dbReference type="RefSeq" id="NP_001031754.1">
    <property type="nucleotide sequence ID" value="NM_001036677.2"/>
</dbReference>
<dbReference type="SMR" id="P82777"/>
<dbReference type="PaxDb" id="3702-AT4G30067.1"/>
<dbReference type="EnsemblPlants" id="AT4G30067.1">
    <property type="protein sequence ID" value="AT4G30067.1"/>
    <property type="gene ID" value="AT4G30067"/>
</dbReference>
<dbReference type="GeneID" id="3770559"/>
<dbReference type="Gramene" id="AT4G30067.1">
    <property type="protein sequence ID" value="AT4G30067.1"/>
    <property type="gene ID" value="AT4G30067"/>
</dbReference>
<dbReference type="KEGG" id="ath:AT4G30067"/>
<dbReference type="Araport" id="AT4G30067"/>
<dbReference type="TAIR" id="AT4G30067">
    <property type="gene designation" value="LCR63"/>
</dbReference>
<dbReference type="HOGENOM" id="CLU_196273_0_0_1"/>
<dbReference type="InParanoid" id="P82777"/>
<dbReference type="OMA" id="ICTYPCQ"/>
<dbReference type="OrthoDB" id="1073746at2759"/>
<dbReference type="PhylomeDB" id="P82777"/>
<dbReference type="PRO" id="PR:P82777"/>
<dbReference type="Proteomes" id="UP000006548">
    <property type="component" value="Chromosome 4"/>
</dbReference>
<dbReference type="ExpressionAtlas" id="P82777">
    <property type="expression patterns" value="baseline"/>
</dbReference>
<dbReference type="GO" id="GO:0005576">
    <property type="term" value="C:extracellular region"/>
    <property type="evidence" value="ECO:0007669"/>
    <property type="project" value="UniProtKB-SubCell"/>
</dbReference>
<dbReference type="GO" id="GO:0050832">
    <property type="term" value="P:defense response to fungus"/>
    <property type="evidence" value="ECO:0007669"/>
    <property type="project" value="UniProtKB-KW"/>
</dbReference>
<dbReference type="GO" id="GO:0031640">
    <property type="term" value="P:killing of cells of another organism"/>
    <property type="evidence" value="ECO:0007669"/>
    <property type="project" value="UniProtKB-KW"/>
</dbReference>
<dbReference type="Gene3D" id="3.30.30.10">
    <property type="entry name" value="Knottin, scorpion toxin-like"/>
    <property type="match status" value="1"/>
</dbReference>
<dbReference type="InterPro" id="IPR039641">
    <property type="entry name" value="LCR"/>
</dbReference>
<dbReference type="InterPro" id="IPR036574">
    <property type="entry name" value="Scorpion_toxin-like_sf"/>
</dbReference>
<dbReference type="PANTHER" id="PTHR36788:SF3">
    <property type="entry name" value="DEFENSIN-LIKE PROTEIN 171-RELATED"/>
    <property type="match status" value="1"/>
</dbReference>
<dbReference type="PANTHER" id="PTHR36788">
    <property type="entry name" value="DEFENSIN-LIKE PROTEIN 183"/>
    <property type="match status" value="1"/>
</dbReference>
<keyword id="KW-0929">Antimicrobial</keyword>
<keyword id="KW-1015">Disulfide bond</keyword>
<keyword id="KW-0295">Fungicide</keyword>
<keyword id="KW-0611">Plant defense</keyword>
<keyword id="KW-1185">Reference proteome</keyword>
<keyword id="KW-0964">Secreted</keyword>
<keyword id="KW-0732">Signal</keyword>
<proteinExistence type="inferred from homology"/>
<organism evidence="4">
    <name type="scientific">Arabidopsis thaliana</name>
    <name type="common">Mouse-ear cress</name>
    <dbReference type="NCBI Taxonomy" id="3702"/>
    <lineage>
        <taxon>Eukaryota</taxon>
        <taxon>Viridiplantae</taxon>
        <taxon>Streptophyta</taxon>
        <taxon>Embryophyta</taxon>
        <taxon>Tracheophyta</taxon>
        <taxon>Spermatophyta</taxon>
        <taxon>Magnoliopsida</taxon>
        <taxon>eudicotyledons</taxon>
        <taxon>Gunneridae</taxon>
        <taxon>Pentapetalae</taxon>
        <taxon>rosids</taxon>
        <taxon>malvids</taxon>
        <taxon>Brassicales</taxon>
        <taxon>Brassicaceae</taxon>
        <taxon>Camelineae</taxon>
        <taxon>Arabidopsis</taxon>
    </lineage>
</organism>
<sequence length="78" mass="8392">MAKAPSPLVFPIIFLIIFALVEPNMGCIQIIGRCIKIPDCSASCRKFLGPHASGYCDNDGAGGTCICTYPCQTKEIHM</sequence>
<accession>P82777</accession>
<accession>Q4VNZ3</accession>
<name>DF173_ARATH</name>